<evidence type="ECO:0000255" key="1">
    <source>
        <dbReference type="HAMAP-Rule" id="MF_03038"/>
    </source>
</evidence>
<evidence type="ECO:0000256" key="2">
    <source>
        <dbReference type="SAM" id="MobiDB-lite"/>
    </source>
</evidence>
<feature type="chain" id="PRO_0000278887" description="Cytosolic Fe-S cluster assembly factor nbp35">
    <location>
        <begin position="1"/>
        <end position="344"/>
    </location>
</feature>
<feature type="region of interest" description="Disordered" evidence="2">
    <location>
        <begin position="1"/>
        <end position="41"/>
    </location>
</feature>
<feature type="binding site" evidence="1">
    <location>
        <position position="30"/>
    </location>
    <ligand>
        <name>[4Fe-4S] cluster</name>
        <dbReference type="ChEBI" id="CHEBI:49883"/>
        <label>1</label>
    </ligand>
</feature>
<feature type="binding site" evidence="1">
    <location>
        <position position="44"/>
    </location>
    <ligand>
        <name>[4Fe-4S] cluster</name>
        <dbReference type="ChEBI" id="CHEBI:49883"/>
        <label>1</label>
    </ligand>
</feature>
<feature type="binding site" evidence="1">
    <location>
        <position position="47"/>
    </location>
    <ligand>
        <name>[4Fe-4S] cluster</name>
        <dbReference type="ChEBI" id="CHEBI:49883"/>
        <label>1</label>
    </ligand>
</feature>
<feature type="binding site" evidence="1">
    <location>
        <position position="53"/>
    </location>
    <ligand>
        <name>[4Fe-4S] cluster</name>
        <dbReference type="ChEBI" id="CHEBI:49883"/>
        <label>1</label>
    </ligand>
</feature>
<feature type="binding site" evidence="1">
    <location>
        <begin position="84"/>
        <end position="91"/>
    </location>
    <ligand>
        <name>ATP</name>
        <dbReference type="ChEBI" id="CHEBI:30616"/>
    </ligand>
</feature>
<feature type="binding site" evidence="1">
    <location>
        <position position="257"/>
    </location>
    <ligand>
        <name>[4Fe-4S] cluster</name>
        <dbReference type="ChEBI" id="CHEBI:49883"/>
        <label>2</label>
        <note>ligand shared with heterodimeric partner</note>
    </ligand>
</feature>
<feature type="binding site" evidence="1">
    <location>
        <position position="260"/>
    </location>
    <ligand>
        <name>[4Fe-4S] cluster</name>
        <dbReference type="ChEBI" id="CHEBI:49883"/>
        <label>2</label>
        <note>ligand shared with heterodimeric partner</note>
    </ligand>
</feature>
<dbReference type="EMBL" id="DS027045">
    <property type="protein sequence ID" value="EAW14455.1"/>
    <property type="molecule type" value="Genomic_DNA"/>
</dbReference>
<dbReference type="RefSeq" id="XP_001275881.1">
    <property type="nucleotide sequence ID" value="XM_001275880.1"/>
</dbReference>
<dbReference type="SMR" id="A1C7T4"/>
<dbReference type="STRING" id="344612.A1C7T4"/>
<dbReference type="EnsemblFungi" id="EAW14455">
    <property type="protein sequence ID" value="EAW14455"/>
    <property type="gene ID" value="ACLA_074930"/>
</dbReference>
<dbReference type="GeneID" id="4707697"/>
<dbReference type="KEGG" id="act:ACLA_074930"/>
<dbReference type="VEuPathDB" id="FungiDB:ACLA_074930"/>
<dbReference type="eggNOG" id="KOG3022">
    <property type="taxonomic scope" value="Eukaryota"/>
</dbReference>
<dbReference type="HOGENOM" id="CLU_024839_0_1_1"/>
<dbReference type="OMA" id="VSGCPMR"/>
<dbReference type="OrthoDB" id="1741334at2759"/>
<dbReference type="Proteomes" id="UP000006701">
    <property type="component" value="Unassembled WGS sequence"/>
</dbReference>
<dbReference type="GO" id="GO:0005829">
    <property type="term" value="C:cytosol"/>
    <property type="evidence" value="ECO:0007669"/>
    <property type="project" value="TreeGrafter"/>
</dbReference>
<dbReference type="GO" id="GO:0051539">
    <property type="term" value="F:4 iron, 4 sulfur cluster binding"/>
    <property type="evidence" value="ECO:0007669"/>
    <property type="project" value="UniProtKB-UniRule"/>
</dbReference>
<dbReference type="GO" id="GO:0005524">
    <property type="term" value="F:ATP binding"/>
    <property type="evidence" value="ECO:0007669"/>
    <property type="project" value="UniProtKB-KW"/>
</dbReference>
<dbReference type="GO" id="GO:0140663">
    <property type="term" value="F:ATP-dependent FeS chaperone activity"/>
    <property type="evidence" value="ECO:0007669"/>
    <property type="project" value="InterPro"/>
</dbReference>
<dbReference type="GO" id="GO:0046872">
    <property type="term" value="F:metal ion binding"/>
    <property type="evidence" value="ECO:0007669"/>
    <property type="project" value="UniProtKB-KW"/>
</dbReference>
<dbReference type="GO" id="GO:0016226">
    <property type="term" value="P:iron-sulfur cluster assembly"/>
    <property type="evidence" value="ECO:0007669"/>
    <property type="project" value="UniProtKB-UniRule"/>
</dbReference>
<dbReference type="CDD" id="cd02037">
    <property type="entry name" value="Mrp_NBP35"/>
    <property type="match status" value="1"/>
</dbReference>
<dbReference type="FunFam" id="3.40.50.300:FF:000427">
    <property type="entry name" value="Cytosolic Fe-S cluster assembly factor NUBP1"/>
    <property type="match status" value="1"/>
</dbReference>
<dbReference type="Gene3D" id="3.40.50.300">
    <property type="entry name" value="P-loop containing nucleotide triphosphate hydrolases"/>
    <property type="match status" value="1"/>
</dbReference>
<dbReference type="HAMAP" id="MF_02040">
    <property type="entry name" value="Mrp_NBP35"/>
    <property type="match status" value="1"/>
</dbReference>
<dbReference type="HAMAP" id="MF_03038">
    <property type="entry name" value="NUBP1"/>
    <property type="match status" value="1"/>
</dbReference>
<dbReference type="InterPro" id="IPR000808">
    <property type="entry name" value="Mrp-like_CS"/>
</dbReference>
<dbReference type="InterPro" id="IPR019591">
    <property type="entry name" value="Mrp/NBP35_ATP-bd"/>
</dbReference>
<dbReference type="InterPro" id="IPR028601">
    <property type="entry name" value="NUBP1/Nbp35"/>
</dbReference>
<dbReference type="InterPro" id="IPR027417">
    <property type="entry name" value="P-loop_NTPase"/>
</dbReference>
<dbReference type="InterPro" id="IPR033756">
    <property type="entry name" value="YlxH/NBP35"/>
</dbReference>
<dbReference type="PANTHER" id="PTHR23264:SF35">
    <property type="entry name" value="CYTOSOLIC FE-S CLUSTER ASSEMBLY FACTOR NUBP1"/>
    <property type="match status" value="1"/>
</dbReference>
<dbReference type="PANTHER" id="PTHR23264">
    <property type="entry name" value="NUCLEOTIDE-BINDING PROTEIN NBP35 YEAST -RELATED"/>
    <property type="match status" value="1"/>
</dbReference>
<dbReference type="Pfam" id="PF10609">
    <property type="entry name" value="ParA"/>
    <property type="match status" value="1"/>
</dbReference>
<dbReference type="SUPFAM" id="SSF52540">
    <property type="entry name" value="P-loop containing nucleoside triphosphate hydrolases"/>
    <property type="match status" value="1"/>
</dbReference>
<dbReference type="PROSITE" id="PS01215">
    <property type="entry name" value="MRP"/>
    <property type="match status" value="1"/>
</dbReference>
<reference key="1">
    <citation type="journal article" date="2008" name="PLoS Genet.">
        <title>Genomic islands in the pathogenic filamentous fungus Aspergillus fumigatus.</title>
        <authorList>
            <person name="Fedorova N.D."/>
            <person name="Khaldi N."/>
            <person name="Joardar V.S."/>
            <person name="Maiti R."/>
            <person name="Amedeo P."/>
            <person name="Anderson M.J."/>
            <person name="Crabtree J."/>
            <person name="Silva J.C."/>
            <person name="Badger J.H."/>
            <person name="Albarraq A."/>
            <person name="Angiuoli S."/>
            <person name="Bussey H."/>
            <person name="Bowyer P."/>
            <person name="Cotty P.J."/>
            <person name="Dyer P.S."/>
            <person name="Egan A."/>
            <person name="Galens K."/>
            <person name="Fraser-Liggett C.M."/>
            <person name="Haas B.J."/>
            <person name="Inman J.M."/>
            <person name="Kent R."/>
            <person name="Lemieux S."/>
            <person name="Malavazi I."/>
            <person name="Orvis J."/>
            <person name="Roemer T."/>
            <person name="Ronning C.M."/>
            <person name="Sundaram J.P."/>
            <person name="Sutton G."/>
            <person name="Turner G."/>
            <person name="Venter J.C."/>
            <person name="White O.R."/>
            <person name="Whitty B.R."/>
            <person name="Youngman P."/>
            <person name="Wolfe K.H."/>
            <person name="Goldman G.H."/>
            <person name="Wortman J.R."/>
            <person name="Jiang B."/>
            <person name="Denning D.W."/>
            <person name="Nierman W.C."/>
        </authorList>
    </citation>
    <scope>NUCLEOTIDE SEQUENCE [LARGE SCALE GENOMIC DNA]</scope>
    <source>
        <strain>ATCC 1007 / CBS 513.65 / DSM 816 / NCTC 3887 / NRRL 1 / QM 1276 / 107</strain>
    </source>
</reference>
<comment type="function">
    <text evidence="1">Component of the cytosolic iron-sulfur (Fe/S) protein assembly (CIA) machinery. Required for maturation of extramitochondrial Fe-S proteins. The nbp35-cfd1 heterotetramer forms a Fe-S scaffold complex, mediating the de novo assembly of an Fe-S cluster and its transfer to target apoproteins.</text>
</comment>
<comment type="cofactor">
    <cofactor evidence="1">
        <name>[4Fe-4S] cluster</name>
        <dbReference type="ChEBI" id="CHEBI:49883"/>
    </cofactor>
    <text evidence="1">Binds 4 [4Fe-4S] clusters per heterotetramer. Contains two stable clusters in the N-termini of nbp35 and two labile, bridging clusters between subunits of the nbp35-cfd1 heterotetramer.</text>
</comment>
<comment type="subunit">
    <text evidence="1">Heterotetramer of 2 nbp35 and 2 cfd1 chains.</text>
</comment>
<comment type="subcellular location">
    <subcellularLocation>
        <location evidence="1">Cytoplasm</location>
    </subcellularLocation>
</comment>
<comment type="similarity">
    <text evidence="1">Belongs to the Mrp/NBP35 ATP-binding proteins family. NUBP1/NBP35 subfamily.</text>
</comment>
<organism>
    <name type="scientific">Aspergillus clavatus (strain ATCC 1007 / CBS 513.65 / DSM 816 / NCTC 3887 / NRRL 1 / QM 1276 / 107)</name>
    <dbReference type="NCBI Taxonomy" id="344612"/>
    <lineage>
        <taxon>Eukaryota</taxon>
        <taxon>Fungi</taxon>
        <taxon>Dikarya</taxon>
        <taxon>Ascomycota</taxon>
        <taxon>Pezizomycotina</taxon>
        <taxon>Eurotiomycetes</taxon>
        <taxon>Eurotiomycetidae</taxon>
        <taxon>Eurotiales</taxon>
        <taxon>Aspergillaceae</taxon>
        <taxon>Aspergillus</taxon>
        <taxon>Aspergillus subgen. Fumigati</taxon>
    </lineage>
</organism>
<protein>
    <recommendedName>
        <fullName evidence="1">Cytosolic Fe-S cluster assembly factor nbp35</fullName>
    </recommendedName>
    <alternativeName>
        <fullName evidence="1">Nucleotide-binding protein 35</fullName>
    </alternativeName>
</protein>
<name>NBP35_ASPCL</name>
<sequence>MAPSLVEPVPAFDAPSKVAPNLVAPEPEHCPGPESEQAGKGDACAGCPNQAICASSTPKGPDPDIPIITERLSQIRHKILVLSGKGGVGKSTFSSLLAHAFASNPESTVGLCDTDICGPSIPKMMGVEAETIHVSNAGWSPVWVTDNLGAMSIQFMLPNRDDAVIWRGPKKNGLIKQFLKDVDWGELDYLIVDTPPGTSDEHLSVNTLLKESGVDGAVIVTTPQEVSLLDVRKEIDFCRKAGIRILGLVENMRGFVCPGCSNTSEIFRATTGGGKRLAKKMGIPFLGSVPLDPRVGMACDYGESFVDSYPDSPASMAIKQVVRSVSQMIGEDPDKVLPPDVMAE</sequence>
<gene>
    <name type="primary">nbp35</name>
    <name type="ORF">ACLA_074930</name>
</gene>
<proteinExistence type="inferred from homology"/>
<keyword id="KW-0004">4Fe-4S</keyword>
<keyword id="KW-0067">ATP-binding</keyword>
<keyword id="KW-0963">Cytoplasm</keyword>
<keyword id="KW-0408">Iron</keyword>
<keyword id="KW-0411">Iron-sulfur</keyword>
<keyword id="KW-0479">Metal-binding</keyword>
<keyword id="KW-0547">Nucleotide-binding</keyword>
<keyword id="KW-1185">Reference proteome</keyword>
<accession>A1C7T4</accession>